<keyword id="KW-0058">Aromatic hydrocarbons catabolism</keyword>
<keyword id="KW-0456">Lyase</keyword>
<keyword id="KW-0464">Manganese</keyword>
<keyword id="KW-0479">Metal-binding</keyword>
<gene>
    <name type="ordered locus">Cagg_2034</name>
</gene>
<accession>B8GBV5</accession>
<proteinExistence type="inferred from homology"/>
<protein>
    <recommendedName>
        <fullName evidence="1">4-hydroxy-2-oxovalerate aldolase</fullName>
        <shortName evidence="1">HOA</shortName>
        <ecNumber evidence="1">4.1.3.39</ecNumber>
    </recommendedName>
    <alternativeName>
        <fullName evidence="1">4-hydroxy-2-keto-pentanoic acid aldolase</fullName>
    </alternativeName>
    <alternativeName>
        <fullName evidence="1">4-hydroxy-2-oxopentanoate aldolase</fullName>
    </alternativeName>
</protein>
<dbReference type="EC" id="4.1.3.39" evidence="1"/>
<dbReference type="EMBL" id="CP001337">
    <property type="protein sequence ID" value="ACL24922.1"/>
    <property type="molecule type" value="Genomic_DNA"/>
</dbReference>
<dbReference type="SMR" id="B8GBV5"/>
<dbReference type="STRING" id="326427.Cagg_2034"/>
<dbReference type="KEGG" id="cag:Cagg_2034"/>
<dbReference type="eggNOG" id="COG0119">
    <property type="taxonomic scope" value="Bacteria"/>
</dbReference>
<dbReference type="HOGENOM" id="CLU_049173_0_0_0"/>
<dbReference type="OrthoDB" id="9804858at2"/>
<dbReference type="Proteomes" id="UP000002508">
    <property type="component" value="Chromosome"/>
</dbReference>
<dbReference type="GO" id="GO:0003852">
    <property type="term" value="F:2-isopropylmalate synthase activity"/>
    <property type="evidence" value="ECO:0007669"/>
    <property type="project" value="TreeGrafter"/>
</dbReference>
<dbReference type="GO" id="GO:0008701">
    <property type="term" value="F:4-hydroxy-2-oxovalerate aldolase activity"/>
    <property type="evidence" value="ECO:0007669"/>
    <property type="project" value="UniProtKB-UniRule"/>
</dbReference>
<dbReference type="GO" id="GO:0030145">
    <property type="term" value="F:manganese ion binding"/>
    <property type="evidence" value="ECO:0007669"/>
    <property type="project" value="UniProtKB-UniRule"/>
</dbReference>
<dbReference type="GO" id="GO:0009056">
    <property type="term" value="P:catabolic process"/>
    <property type="evidence" value="ECO:0007669"/>
    <property type="project" value="UniProtKB-KW"/>
</dbReference>
<dbReference type="GO" id="GO:0009098">
    <property type="term" value="P:L-leucine biosynthetic process"/>
    <property type="evidence" value="ECO:0007669"/>
    <property type="project" value="TreeGrafter"/>
</dbReference>
<dbReference type="CDD" id="cd07943">
    <property type="entry name" value="DRE_TIM_HOA"/>
    <property type="match status" value="1"/>
</dbReference>
<dbReference type="Gene3D" id="1.10.8.60">
    <property type="match status" value="1"/>
</dbReference>
<dbReference type="Gene3D" id="3.20.20.70">
    <property type="entry name" value="Aldolase class I"/>
    <property type="match status" value="1"/>
</dbReference>
<dbReference type="HAMAP" id="MF_01656">
    <property type="entry name" value="HOA"/>
    <property type="match status" value="1"/>
</dbReference>
<dbReference type="InterPro" id="IPR050073">
    <property type="entry name" value="2-IPM_HCS-like"/>
</dbReference>
<dbReference type="InterPro" id="IPR017629">
    <property type="entry name" value="4OH_2_O-val_aldolase"/>
</dbReference>
<dbReference type="InterPro" id="IPR013785">
    <property type="entry name" value="Aldolase_TIM"/>
</dbReference>
<dbReference type="InterPro" id="IPR012425">
    <property type="entry name" value="DmpG_comm"/>
</dbReference>
<dbReference type="InterPro" id="IPR035685">
    <property type="entry name" value="DRE_TIM_HOA"/>
</dbReference>
<dbReference type="InterPro" id="IPR000891">
    <property type="entry name" value="PYR_CT"/>
</dbReference>
<dbReference type="NCBIfam" id="TIGR03217">
    <property type="entry name" value="4OH_2_O_val_ald"/>
    <property type="match status" value="1"/>
</dbReference>
<dbReference type="NCBIfam" id="NF006049">
    <property type="entry name" value="PRK08195.1"/>
    <property type="match status" value="1"/>
</dbReference>
<dbReference type="PANTHER" id="PTHR10277:SF9">
    <property type="entry name" value="2-ISOPROPYLMALATE SYNTHASE 1, CHLOROPLASTIC-RELATED"/>
    <property type="match status" value="1"/>
</dbReference>
<dbReference type="PANTHER" id="PTHR10277">
    <property type="entry name" value="HOMOCITRATE SYNTHASE-RELATED"/>
    <property type="match status" value="1"/>
</dbReference>
<dbReference type="Pfam" id="PF07836">
    <property type="entry name" value="DmpG_comm"/>
    <property type="match status" value="1"/>
</dbReference>
<dbReference type="Pfam" id="PF00682">
    <property type="entry name" value="HMGL-like"/>
    <property type="match status" value="1"/>
</dbReference>
<dbReference type="SUPFAM" id="SSF51569">
    <property type="entry name" value="Aldolase"/>
    <property type="match status" value="1"/>
</dbReference>
<dbReference type="SUPFAM" id="SSF89000">
    <property type="entry name" value="post-HMGL domain-like"/>
    <property type="match status" value="1"/>
</dbReference>
<dbReference type="PROSITE" id="PS50991">
    <property type="entry name" value="PYR_CT"/>
    <property type="match status" value="1"/>
</dbReference>
<feature type="chain" id="PRO_0000387812" description="4-hydroxy-2-oxovalerate aldolase">
    <location>
        <begin position="1"/>
        <end position="343"/>
    </location>
</feature>
<feature type="domain" description="Pyruvate carboxyltransferase" evidence="1">
    <location>
        <begin position="4"/>
        <end position="254"/>
    </location>
</feature>
<feature type="active site" description="Proton acceptor" evidence="1">
    <location>
        <position position="16"/>
    </location>
</feature>
<feature type="binding site" evidence="1">
    <location>
        <begin position="12"/>
        <end position="13"/>
    </location>
    <ligand>
        <name>substrate</name>
    </ligand>
</feature>
<feature type="binding site" evidence="1">
    <location>
        <position position="13"/>
    </location>
    <ligand>
        <name>Mn(2+)</name>
        <dbReference type="ChEBI" id="CHEBI:29035"/>
    </ligand>
</feature>
<feature type="binding site" evidence="1">
    <location>
        <position position="166"/>
    </location>
    <ligand>
        <name>substrate</name>
    </ligand>
</feature>
<feature type="binding site" evidence="1">
    <location>
        <position position="193"/>
    </location>
    <ligand>
        <name>Mn(2+)</name>
        <dbReference type="ChEBI" id="CHEBI:29035"/>
    </ligand>
</feature>
<feature type="binding site" evidence="1">
    <location>
        <position position="193"/>
    </location>
    <ligand>
        <name>substrate</name>
    </ligand>
</feature>
<feature type="binding site" evidence="1">
    <location>
        <position position="195"/>
    </location>
    <ligand>
        <name>Mn(2+)</name>
        <dbReference type="ChEBI" id="CHEBI:29035"/>
    </ligand>
</feature>
<feature type="binding site" evidence="1">
    <location>
        <position position="284"/>
    </location>
    <ligand>
        <name>substrate</name>
    </ligand>
</feature>
<feature type="site" description="Transition state stabilizer" evidence="1">
    <location>
        <position position="12"/>
    </location>
</feature>
<evidence type="ECO:0000255" key="1">
    <source>
        <dbReference type="HAMAP-Rule" id="MF_01656"/>
    </source>
</evidence>
<comment type="catalytic activity">
    <reaction evidence="1">
        <text>(S)-4-hydroxy-2-oxopentanoate = acetaldehyde + pyruvate</text>
        <dbReference type="Rhea" id="RHEA:22624"/>
        <dbReference type="ChEBI" id="CHEBI:15343"/>
        <dbReference type="ChEBI" id="CHEBI:15361"/>
        <dbReference type="ChEBI" id="CHEBI:73143"/>
        <dbReference type="EC" id="4.1.3.39"/>
    </reaction>
</comment>
<comment type="similarity">
    <text evidence="1">Belongs to the 4-hydroxy-2-oxovalerate aldolase family.</text>
</comment>
<organism>
    <name type="scientific">Chloroflexus aggregans (strain MD-66 / DSM 9485)</name>
    <dbReference type="NCBI Taxonomy" id="326427"/>
    <lineage>
        <taxon>Bacteria</taxon>
        <taxon>Bacillati</taxon>
        <taxon>Chloroflexota</taxon>
        <taxon>Chloroflexia</taxon>
        <taxon>Chloroflexales</taxon>
        <taxon>Chloroflexineae</taxon>
        <taxon>Chloroflexaceae</taxon>
        <taxon>Chloroflexus</taxon>
    </lineage>
</organism>
<name>HOA_CHLAD</name>
<sequence length="343" mass="36743">MKAPRLTDTTLRDGSHPMRHQFTREQVAKIVQALDRAGVPVIEVSHGDGLAGSSLQYGFSHTSEFDLIETARSYAERAKIAALMLPGIGTRQELKEAVARGIQVVRIATQCTEADISEQHFGLAKELGLETVGFLMMAHMRPPEALVEQAKLMESYGADCVYIVDSAGAMLPHDAAARVRALKEALSVQVGFHAHNNLGLGIGNTLAALEAGADQIDGCLRGLGAGAGNAATELLAAVLDRLGLNPGLDVFGLMDAAEYIVAPIMPFQPFPDRDAITIGYAGVYSTFLLHAKRAGEQYGIDPREILVELGRRQAVAGQEDWIIDVALDLSRRRGAGTRKEAHG</sequence>
<reference key="1">
    <citation type="submission" date="2008-12" db="EMBL/GenBank/DDBJ databases">
        <title>Complete sequence of Chloroflexus aggregans DSM 9485.</title>
        <authorList>
            <consortium name="US DOE Joint Genome Institute"/>
            <person name="Lucas S."/>
            <person name="Copeland A."/>
            <person name="Lapidus A."/>
            <person name="Glavina del Rio T."/>
            <person name="Dalin E."/>
            <person name="Tice H."/>
            <person name="Pitluck S."/>
            <person name="Foster B."/>
            <person name="Larimer F."/>
            <person name="Land M."/>
            <person name="Hauser L."/>
            <person name="Kyrpides N."/>
            <person name="Mikhailova N."/>
            <person name="Bryant D.A."/>
            <person name="Richardson P."/>
        </authorList>
    </citation>
    <scope>NUCLEOTIDE SEQUENCE [LARGE SCALE GENOMIC DNA]</scope>
    <source>
        <strain>MD-66 / DSM 9485</strain>
    </source>
</reference>